<name>ECR_HELVI</name>
<organism>
    <name type="scientific">Heliothis virescens</name>
    <name type="common">Tobacco budworm moth</name>
    <dbReference type="NCBI Taxonomy" id="7102"/>
    <lineage>
        <taxon>Eukaryota</taxon>
        <taxon>Metazoa</taxon>
        <taxon>Ecdysozoa</taxon>
        <taxon>Arthropoda</taxon>
        <taxon>Hexapoda</taxon>
        <taxon>Insecta</taxon>
        <taxon>Pterygota</taxon>
        <taxon>Neoptera</taxon>
        <taxon>Endopterygota</taxon>
        <taxon>Lepidoptera</taxon>
        <taxon>Glossata</taxon>
        <taxon>Ditrysia</taxon>
        <taxon>Noctuoidea</taxon>
        <taxon>Noctuidae</taxon>
        <taxon>Heliothinae</taxon>
        <taxon>Heliothis</taxon>
    </lineage>
</organism>
<reference key="1">
    <citation type="journal article" date="1999" name="Insect Biochem. Mol. Biol.">
        <title>Transcriptional activation of the cloned Heliothis virescens (Lepidoptera) ecdysone receptor (HvEcR) by muristeroneA.</title>
        <authorList>
            <person name="Martinez A."/>
            <person name="Scanlon D."/>
            <person name="Gross B."/>
            <person name="Perara S.C."/>
            <person name="Palli S.R."/>
            <person name="Greenland A.J."/>
            <person name="Windass J."/>
            <person name="Pongs O."/>
            <person name="Broad P."/>
            <person name="Jepson I."/>
        </authorList>
    </citation>
    <scope>NUCLEOTIDE SEQUENCE [MRNA]</scope>
    <source>
        <strain>BRC</strain>
    </source>
</reference>
<keyword id="KW-0002">3D-structure</keyword>
<keyword id="KW-0238">DNA-binding</keyword>
<keyword id="KW-0479">Metal-binding</keyword>
<keyword id="KW-0539">Nucleus</keyword>
<keyword id="KW-0675">Receptor</keyword>
<keyword id="KW-0804">Transcription</keyword>
<keyword id="KW-0805">Transcription regulation</keyword>
<keyword id="KW-0862">Zinc</keyword>
<keyword id="KW-0863">Zinc-finger</keyword>
<protein>
    <recommendedName>
        <fullName>Ecdysone receptor</fullName>
    </recommendedName>
    <alternativeName>
        <fullName>20-hydroxy-ecdysone receptor</fullName>
        <shortName>20E receptor</shortName>
    </alternativeName>
    <alternativeName>
        <fullName>EcRH</fullName>
    </alternativeName>
    <alternativeName>
        <fullName>Ecdysteroid receptor</fullName>
    </alternativeName>
    <alternativeName>
        <fullName>HvEcR</fullName>
    </alternativeName>
    <alternativeName>
        <fullName>Nuclear receptor subfamily 1 group H member 1</fullName>
    </alternativeName>
</protein>
<accession>O18473</accession>
<dbReference type="EMBL" id="Y09009">
    <property type="protein sequence ID" value="CAA70212.1"/>
    <property type="molecule type" value="mRNA"/>
</dbReference>
<dbReference type="PDB" id="1R1K">
    <property type="method" value="X-ray"/>
    <property type="resolution" value="2.90 A"/>
    <property type="chains" value="D=305-550"/>
</dbReference>
<dbReference type="PDB" id="1R20">
    <property type="method" value="X-ray"/>
    <property type="resolution" value="3.00 A"/>
    <property type="chains" value="D=306-550"/>
</dbReference>
<dbReference type="PDB" id="2R40">
    <property type="method" value="X-ray"/>
    <property type="resolution" value="2.40 A"/>
    <property type="chains" value="D=305-550"/>
</dbReference>
<dbReference type="PDB" id="4UMM">
    <property type="method" value="EM"/>
    <property type="resolution" value="11.60 A"/>
    <property type="chains" value="E=157-243, G=305-550"/>
</dbReference>
<dbReference type="PDB" id="7BJU">
    <property type="method" value="X-ray"/>
    <property type="resolution" value="2.85 A"/>
    <property type="chains" value="D=298-550"/>
</dbReference>
<dbReference type="PDB" id="7BJV">
    <property type="method" value="X-ray"/>
    <property type="resolution" value="3.05 A"/>
    <property type="chains" value="D/E/F=298-550"/>
</dbReference>
<dbReference type="PDBsum" id="1R1K"/>
<dbReference type="PDBsum" id="1R20"/>
<dbReference type="PDBsum" id="2R40"/>
<dbReference type="PDBsum" id="4UMM"/>
<dbReference type="PDBsum" id="7BJU"/>
<dbReference type="PDBsum" id="7BJV"/>
<dbReference type="SMR" id="O18473"/>
<dbReference type="IntAct" id="O18473">
    <property type="interactions" value="1"/>
</dbReference>
<dbReference type="BindingDB" id="O18473"/>
<dbReference type="ChEMBL" id="CHEMBL2366582"/>
<dbReference type="EvolutionaryTrace" id="O18473"/>
<dbReference type="GO" id="GO:0090575">
    <property type="term" value="C:RNA polymerase II transcription regulator complex"/>
    <property type="evidence" value="ECO:0007669"/>
    <property type="project" value="TreeGrafter"/>
</dbReference>
<dbReference type="GO" id="GO:0035100">
    <property type="term" value="F:ecdysone binding"/>
    <property type="evidence" value="ECO:0007669"/>
    <property type="project" value="InterPro"/>
</dbReference>
<dbReference type="GO" id="GO:0004879">
    <property type="term" value="F:nuclear receptor activity"/>
    <property type="evidence" value="ECO:0007669"/>
    <property type="project" value="InterPro"/>
</dbReference>
<dbReference type="GO" id="GO:0000978">
    <property type="term" value="F:RNA polymerase II cis-regulatory region sequence-specific DNA binding"/>
    <property type="evidence" value="ECO:0007669"/>
    <property type="project" value="TreeGrafter"/>
</dbReference>
<dbReference type="GO" id="GO:0008270">
    <property type="term" value="F:zinc ion binding"/>
    <property type="evidence" value="ECO:0007669"/>
    <property type="project" value="UniProtKB-KW"/>
</dbReference>
<dbReference type="GO" id="GO:0030154">
    <property type="term" value="P:cell differentiation"/>
    <property type="evidence" value="ECO:0007669"/>
    <property type="project" value="TreeGrafter"/>
</dbReference>
<dbReference type="GO" id="GO:0035076">
    <property type="term" value="P:ecdysone receptor signaling pathway"/>
    <property type="evidence" value="ECO:0007669"/>
    <property type="project" value="InterPro"/>
</dbReference>
<dbReference type="GO" id="GO:0000122">
    <property type="term" value="P:negative regulation of transcription by RNA polymerase II"/>
    <property type="evidence" value="ECO:0007669"/>
    <property type="project" value="TreeGrafter"/>
</dbReference>
<dbReference type="GO" id="GO:0045944">
    <property type="term" value="P:positive regulation of transcription by RNA polymerase II"/>
    <property type="evidence" value="ECO:0007669"/>
    <property type="project" value="TreeGrafter"/>
</dbReference>
<dbReference type="CDD" id="cd07161">
    <property type="entry name" value="NR_DBD_EcR"/>
    <property type="match status" value="1"/>
</dbReference>
<dbReference type="CDD" id="cd06938">
    <property type="entry name" value="NR_LBD_EcR"/>
    <property type="match status" value="1"/>
</dbReference>
<dbReference type="FunFam" id="1.10.565.10:FF:000030">
    <property type="entry name" value="Ecdysone receptor (Isoform A)"/>
    <property type="match status" value="1"/>
</dbReference>
<dbReference type="FunFam" id="3.30.50.10:FF:000031">
    <property type="entry name" value="Ecdysone receptor A1"/>
    <property type="match status" value="1"/>
</dbReference>
<dbReference type="Gene3D" id="3.30.50.10">
    <property type="entry name" value="Erythroid Transcription Factor GATA-1, subunit A"/>
    <property type="match status" value="1"/>
</dbReference>
<dbReference type="Gene3D" id="1.10.565.10">
    <property type="entry name" value="Retinoid X Receptor"/>
    <property type="match status" value="1"/>
</dbReference>
<dbReference type="InterPro" id="IPR003069">
    <property type="entry name" value="Ecdystd_rcpt"/>
</dbReference>
<dbReference type="InterPro" id="IPR035500">
    <property type="entry name" value="NHR-like_dom_sf"/>
</dbReference>
<dbReference type="InterPro" id="IPR041889">
    <property type="entry name" value="NR_LBD_EcR"/>
</dbReference>
<dbReference type="InterPro" id="IPR000536">
    <property type="entry name" value="Nucl_hrmn_rcpt_lig-bd"/>
</dbReference>
<dbReference type="InterPro" id="IPR050234">
    <property type="entry name" value="Nuclear_hormone_rcpt_NR1"/>
</dbReference>
<dbReference type="InterPro" id="IPR001723">
    <property type="entry name" value="Nuclear_hrmn_rcpt"/>
</dbReference>
<dbReference type="InterPro" id="IPR001628">
    <property type="entry name" value="Znf_hrmn_rcpt"/>
</dbReference>
<dbReference type="InterPro" id="IPR013088">
    <property type="entry name" value="Znf_NHR/GATA"/>
</dbReference>
<dbReference type="PANTHER" id="PTHR24082:SF507">
    <property type="entry name" value="BILE ACID RECEPTOR-RELATED"/>
    <property type="match status" value="1"/>
</dbReference>
<dbReference type="PANTHER" id="PTHR24082">
    <property type="entry name" value="NUCLEAR HORMONE RECEPTOR"/>
    <property type="match status" value="1"/>
</dbReference>
<dbReference type="Pfam" id="PF00104">
    <property type="entry name" value="Hormone_recep"/>
    <property type="match status" value="1"/>
</dbReference>
<dbReference type="Pfam" id="PF00105">
    <property type="entry name" value="zf-C4"/>
    <property type="match status" value="1"/>
</dbReference>
<dbReference type="PRINTS" id="PR01283">
    <property type="entry name" value="ECDYSTEROIDR"/>
</dbReference>
<dbReference type="PRINTS" id="PR00398">
    <property type="entry name" value="STRDHORMONER"/>
</dbReference>
<dbReference type="PRINTS" id="PR00047">
    <property type="entry name" value="STROIDFINGER"/>
</dbReference>
<dbReference type="SMART" id="SM00430">
    <property type="entry name" value="HOLI"/>
    <property type="match status" value="1"/>
</dbReference>
<dbReference type="SMART" id="SM00399">
    <property type="entry name" value="ZnF_C4"/>
    <property type="match status" value="1"/>
</dbReference>
<dbReference type="SUPFAM" id="SSF57716">
    <property type="entry name" value="Glucocorticoid receptor-like (DNA-binding domain)"/>
    <property type="match status" value="1"/>
</dbReference>
<dbReference type="SUPFAM" id="SSF48508">
    <property type="entry name" value="Nuclear receptor ligand-binding domain"/>
    <property type="match status" value="1"/>
</dbReference>
<dbReference type="PROSITE" id="PS51843">
    <property type="entry name" value="NR_LBD"/>
    <property type="match status" value="1"/>
</dbReference>
<dbReference type="PROSITE" id="PS00031">
    <property type="entry name" value="NUCLEAR_REC_DBD_1"/>
    <property type="match status" value="1"/>
</dbReference>
<dbReference type="PROSITE" id="PS51030">
    <property type="entry name" value="NUCLEAR_REC_DBD_2"/>
    <property type="match status" value="1"/>
</dbReference>
<feature type="chain" id="PRO_0000053528" description="Ecdysone receptor">
    <location>
        <begin position="1"/>
        <end position="576"/>
    </location>
</feature>
<feature type="domain" description="NR LBD" evidence="4">
    <location>
        <begin position="314"/>
        <end position="548"/>
    </location>
</feature>
<feature type="DNA-binding region" description="Nuclear receptor" evidence="3">
    <location>
        <begin position="163"/>
        <end position="235"/>
    </location>
</feature>
<feature type="zinc finger region" description="NR C4-type" evidence="3">
    <location>
        <begin position="163"/>
        <end position="183"/>
    </location>
</feature>
<feature type="zinc finger region" description="NR C4-type" evidence="3">
    <location>
        <begin position="199"/>
        <end position="223"/>
    </location>
</feature>
<feature type="region of interest" description="Modulating" evidence="2">
    <location>
        <begin position="1"/>
        <end position="162"/>
    </location>
</feature>
<feature type="region of interest" description="Disordered" evidence="5">
    <location>
        <begin position="87"/>
        <end position="154"/>
    </location>
</feature>
<feature type="region of interest" description="Disordered" evidence="5">
    <location>
        <begin position="245"/>
        <end position="269"/>
    </location>
</feature>
<feature type="compositionally biased region" description="Low complexity" evidence="5">
    <location>
        <begin position="91"/>
        <end position="106"/>
    </location>
</feature>
<feature type="compositionally biased region" description="Pro residues" evidence="5">
    <location>
        <begin position="107"/>
        <end position="117"/>
    </location>
</feature>
<feature type="helix" evidence="8">
    <location>
        <begin position="313"/>
        <end position="328"/>
    </location>
</feature>
<feature type="helix" evidence="8">
    <location>
        <begin position="334"/>
        <end position="341"/>
    </location>
</feature>
<feature type="helix" evidence="8">
    <location>
        <begin position="352"/>
        <end position="374"/>
    </location>
</feature>
<feature type="helix" evidence="8">
    <location>
        <begin position="378"/>
        <end position="380"/>
    </location>
</feature>
<feature type="helix" evidence="8">
    <location>
        <begin position="383"/>
        <end position="403"/>
    </location>
</feature>
<feature type="turn" evidence="8">
    <location>
        <begin position="408"/>
        <end position="411"/>
    </location>
</feature>
<feature type="strand" evidence="8">
    <location>
        <begin position="412"/>
        <end position="414"/>
    </location>
</feature>
<feature type="turn" evidence="9">
    <location>
        <begin position="418"/>
        <end position="421"/>
    </location>
</feature>
<feature type="helix" evidence="8">
    <location>
        <begin position="423"/>
        <end position="428"/>
    </location>
</feature>
<feature type="turn" evidence="7">
    <location>
        <begin position="429"/>
        <end position="431"/>
    </location>
</feature>
<feature type="helix" evidence="8">
    <location>
        <begin position="432"/>
        <end position="446"/>
    </location>
</feature>
<feature type="turn" evidence="8">
    <location>
        <begin position="447"/>
        <end position="449"/>
    </location>
</feature>
<feature type="helix" evidence="8">
    <location>
        <begin position="452"/>
        <end position="463"/>
    </location>
</feature>
<feature type="helix" evidence="8">
    <location>
        <begin position="473"/>
        <end position="494"/>
    </location>
</feature>
<feature type="turn" evidence="8">
    <location>
        <begin position="495"/>
        <end position="497"/>
    </location>
</feature>
<feature type="helix" evidence="8">
    <location>
        <begin position="501"/>
        <end position="531"/>
    </location>
</feature>
<feature type="helix" evidence="8">
    <location>
        <begin position="538"/>
        <end position="543"/>
    </location>
</feature>
<evidence type="ECO:0000250" key="1"/>
<evidence type="ECO:0000255" key="2"/>
<evidence type="ECO:0000255" key="3">
    <source>
        <dbReference type="PROSITE-ProRule" id="PRU00407"/>
    </source>
</evidence>
<evidence type="ECO:0000255" key="4">
    <source>
        <dbReference type="PROSITE-ProRule" id="PRU01189"/>
    </source>
</evidence>
<evidence type="ECO:0000256" key="5">
    <source>
        <dbReference type="SAM" id="MobiDB-lite"/>
    </source>
</evidence>
<evidence type="ECO:0000305" key="6"/>
<evidence type="ECO:0007829" key="7">
    <source>
        <dbReference type="PDB" id="1R1K"/>
    </source>
</evidence>
<evidence type="ECO:0007829" key="8">
    <source>
        <dbReference type="PDB" id="2R40"/>
    </source>
</evidence>
<evidence type="ECO:0007829" key="9">
    <source>
        <dbReference type="PDB" id="7BJU"/>
    </source>
</evidence>
<comment type="function">
    <text evidence="1">Receptor for ecdysone. Binds to ecdysone response elements (ECRES) (By similarity).</text>
</comment>
<comment type="interaction">
    <interactant intactId="EBI-1037411">
        <id>O18473</id>
    </interactant>
    <interactant intactId="EBI-1037399">
        <id>Q7SIF6</id>
    </interactant>
    <organismsDiffer>false</organismsDiffer>
    <experiments>2</experiments>
</comment>
<comment type="subcellular location">
    <subcellularLocation>
        <location>Nucleus</location>
    </subcellularLocation>
</comment>
<comment type="similarity">
    <text evidence="6">Belongs to the nuclear hormone receptor family. NR1 subfamily.</text>
</comment>
<gene>
    <name type="primary">EcR</name>
    <name type="synonym">NR1H1</name>
</gene>
<sequence>MSLGARGYRRCDTLADMRRRWYNNGPFQTLRMLEESSSEVTSSSALGLPPAMVMSPESLASPEIGGLELWGYDDGITYSMAQSLGTCTMEQQQPQPQQQPQQTQPLPSMPLPMPPTTPKSENESMSSGREELSPASSVNGCSTDGEARRQKKGPAPRQQEELCLVCGDRASGYHYNALTCEGCKGFFRRSVTKNAVYICKFGHACEMDIYMRRKCQECRLKKCLAVGMRPECVVPENQCAMKRKEKKAQREKDKLPVSTTTVDDHMPPIMQCDPPPPEAARILECVQHEVVPRFLNEKLMEQNRLKNVPPLTANQKSLIARLVWYQEGYEQPSEEDLKRVTQSDEDDEDSDMPFRQITEMTILTVQLIVEFAKGLPGFAKISQSDQITLLKACSSEVMMLRVARRYDAATDSVLFANNQAYTRDNYRKAGMAYVIEDLLHFCRCMYSMMMDNVHYALLTAIVIFSDRPGLEQPLLVEEIQRYYLNTLRVYILNQNSASPRGAVIFGEILGILTEIRTLGMQNSNMCISLKLKNRKLPPFLEEIWDVADVATTATPVAAEAPAPLAPAPPARPPATV</sequence>
<proteinExistence type="evidence at protein level"/>